<gene>
    <name evidence="1" type="primary">azoR</name>
    <name type="ordered locus">SG1492</name>
</gene>
<feature type="chain" id="PRO_0000245974" description="FMN-dependent NADH:quinone oxidoreductase">
    <location>
        <begin position="1"/>
        <end position="201"/>
    </location>
</feature>
<feature type="binding site" evidence="1">
    <location>
        <position position="10"/>
    </location>
    <ligand>
        <name>FMN</name>
        <dbReference type="ChEBI" id="CHEBI:58210"/>
    </ligand>
</feature>
<feature type="binding site" evidence="1">
    <location>
        <begin position="16"/>
        <end position="18"/>
    </location>
    <ligand>
        <name>FMN</name>
        <dbReference type="ChEBI" id="CHEBI:58210"/>
    </ligand>
</feature>
<feature type="binding site" evidence="1">
    <location>
        <begin position="96"/>
        <end position="99"/>
    </location>
    <ligand>
        <name>FMN</name>
        <dbReference type="ChEBI" id="CHEBI:58210"/>
    </ligand>
</feature>
<reference key="1">
    <citation type="journal article" date="2006" name="Genome Res.">
        <title>Massive genome erosion and functional adaptations provide insights into the symbiotic lifestyle of Sodalis glossinidius in the tsetse host.</title>
        <authorList>
            <person name="Toh H."/>
            <person name="Weiss B.L."/>
            <person name="Perkin S.A.H."/>
            <person name="Yamashita A."/>
            <person name="Oshima K."/>
            <person name="Hattori M."/>
            <person name="Aksoy S."/>
        </authorList>
    </citation>
    <scope>NUCLEOTIDE SEQUENCE [LARGE SCALE GENOMIC DNA]</scope>
    <source>
        <strain>morsitans</strain>
    </source>
</reference>
<organism>
    <name type="scientific">Sodalis glossinidius (strain morsitans)</name>
    <dbReference type="NCBI Taxonomy" id="343509"/>
    <lineage>
        <taxon>Bacteria</taxon>
        <taxon>Pseudomonadati</taxon>
        <taxon>Pseudomonadota</taxon>
        <taxon>Gammaproteobacteria</taxon>
        <taxon>Enterobacterales</taxon>
        <taxon>Bruguierivoracaceae</taxon>
        <taxon>Sodalis</taxon>
    </lineage>
</organism>
<protein>
    <recommendedName>
        <fullName evidence="1">FMN-dependent NADH:quinone oxidoreductase</fullName>
        <ecNumber evidence="1">1.6.5.-</ecNumber>
    </recommendedName>
    <alternativeName>
        <fullName evidence="1">Azo-dye reductase</fullName>
    </alternativeName>
    <alternativeName>
        <fullName evidence="1">FMN-dependent NADH-azo compound oxidoreductase</fullName>
    </alternativeName>
    <alternativeName>
        <fullName evidence="1">FMN-dependent NADH-azoreductase</fullName>
        <ecNumber evidence="1">1.7.1.17</ecNumber>
    </alternativeName>
</protein>
<keyword id="KW-0285">Flavoprotein</keyword>
<keyword id="KW-0288">FMN</keyword>
<keyword id="KW-0520">NAD</keyword>
<keyword id="KW-0560">Oxidoreductase</keyword>
<evidence type="ECO:0000255" key="1">
    <source>
        <dbReference type="HAMAP-Rule" id="MF_01216"/>
    </source>
</evidence>
<dbReference type="EC" id="1.6.5.-" evidence="1"/>
<dbReference type="EC" id="1.7.1.17" evidence="1"/>
<dbReference type="EMBL" id="AP008232">
    <property type="protein sequence ID" value="BAE74767.1"/>
    <property type="molecule type" value="Genomic_DNA"/>
</dbReference>
<dbReference type="RefSeq" id="WP_011411312.1">
    <property type="nucleotide sequence ID" value="NC_007712.1"/>
</dbReference>
<dbReference type="SMR" id="Q2NSV8"/>
<dbReference type="KEGG" id="sgl:SG1492"/>
<dbReference type="eggNOG" id="COG1182">
    <property type="taxonomic scope" value="Bacteria"/>
</dbReference>
<dbReference type="HOGENOM" id="CLU_088964_0_0_6"/>
<dbReference type="OrthoDB" id="9787136at2"/>
<dbReference type="Proteomes" id="UP000001932">
    <property type="component" value="Chromosome"/>
</dbReference>
<dbReference type="GO" id="GO:0009055">
    <property type="term" value="F:electron transfer activity"/>
    <property type="evidence" value="ECO:0007669"/>
    <property type="project" value="UniProtKB-UniRule"/>
</dbReference>
<dbReference type="GO" id="GO:0010181">
    <property type="term" value="F:FMN binding"/>
    <property type="evidence" value="ECO:0007669"/>
    <property type="project" value="UniProtKB-UniRule"/>
</dbReference>
<dbReference type="GO" id="GO:0016652">
    <property type="term" value="F:oxidoreductase activity, acting on NAD(P)H as acceptor"/>
    <property type="evidence" value="ECO:0007669"/>
    <property type="project" value="UniProtKB-UniRule"/>
</dbReference>
<dbReference type="GO" id="GO:0016655">
    <property type="term" value="F:oxidoreductase activity, acting on NAD(P)H, quinone or similar compound as acceptor"/>
    <property type="evidence" value="ECO:0007669"/>
    <property type="project" value="InterPro"/>
</dbReference>
<dbReference type="FunFam" id="3.40.50.360:FF:000010">
    <property type="entry name" value="FMN-dependent NADH-azoreductase"/>
    <property type="match status" value="1"/>
</dbReference>
<dbReference type="Gene3D" id="3.40.50.360">
    <property type="match status" value="1"/>
</dbReference>
<dbReference type="HAMAP" id="MF_01216">
    <property type="entry name" value="Azoreductase_type1"/>
    <property type="match status" value="1"/>
</dbReference>
<dbReference type="InterPro" id="IPR003680">
    <property type="entry name" value="Flavodoxin_fold"/>
</dbReference>
<dbReference type="InterPro" id="IPR029039">
    <property type="entry name" value="Flavoprotein-like_sf"/>
</dbReference>
<dbReference type="InterPro" id="IPR050104">
    <property type="entry name" value="FMN-dep_NADH:Q_OxRdtase_AzoR1"/>
</dbReference>
<dbReference type="InterPro" id="IPR023048">
    <property type="entry name" value="NADH:quinone_OxRdtase_FMN_depd"/>
</dbReference>
<dbReference type="PANTHER" id="PTHR43741">
    <property type="entry name" value="FMN-DEPENDENT NADH-AZOREDUCTASE 1"/>
    <property type="match status" value="1"/>
</dbReference>
<dbReference type="PANTHER" id="PTHR43741:SF2">
    <property type="entry name" value="FMN-DEPENDENT NADH:QUINONE OXIDOREDUCTASE"/>
    <property type="match status" value="1"/>
</dbReference>
<dbReference type="Pfam" id="PF02525">
    <property type="entry name" value="Flavodoxin_2"/>
    <property type="match status" value="1"/>
</dbReference>
<dbReference type="SUPFAM" id="SSF52218">
    <property type="entry name" value="Flavoproteins"/>
    <property type="match status" value="1"/>
</dbReference>
<sequence>MSKVLVVKSSILATFSQSNPLADHFIDQWREQHLNDDITVRDLGAQPVPELDGELVGALRPSDATLTQRQQQALELSDALIGELQANDVLVFTAPMYNFAIPSKLKNYFDLIARASVTFRYSEQGPERLVKNKRALILTTRDGIHKDTSSDLVTHYLRLFLGFIGITDVSFIYAEGVAYGPEAAVKAQEEAKASIQSFVSA</sequence>
<accession>Q2NSV8</accession>
<name>AZOR_SODGM</name>
<comment type="function">
    <text evidence="1">Quinone reductase that provides resistance to thiol-specific stress caused by electrophilic quinones.</text>
</comment>
<comment type="function">
    <text evidence="1">Also exhibits azoreductase activity. Catalyzes the reductive cleavage of the azo bond in aromatic azo compounds to the corresponding amines.</text>
</comment>
<comment type="catalytic activity">
    <reaction evidence="1">
        <text>2 a quinone + NADH + H(+) = 2 a 1,4-benzosemiquinone + NAD(+)</text>
        <dbReference type="Rhea" id="RHEA:65952"/>
        <dbReference type="ChEBI" id="CHEBI:15378"/>
        <dbReference type="ChEBI" id="CHEBI:57540"/>
        <dbReference type="ChEBI" id="CHEBI:57945"/>
        <dbReference type="ChEBI" id="CHEBI:132124"/>
        <dbReference type="ChEBI" id="CHEBI:134225"/>
    </reaction>
</comment>
<comment type="catalytic activity">
    <reaction evidence="1">
        <text>N,N-dimethyl-1,4-phenylenediamine + anthranilate + 2 NAD(+) = 2-(4-dimethylaminophenyl)diazenylbenzoate + 2 NADH + 2 H(+)</text>
        <dbReference type="Rhea" id="RHEA:55872"/>
        <dbReference type="ChEBI" id="CHEBI:15378"/>
        <dbReference type="ChEBI" id="CHEBI:15783"/>
        <dbReference type="ChEBI" id="CHEBI:16567"/>
        <dbReference type="ChEBI" id="CHEBI:57540"/>
        <dbReference type="ChEBI" id="CHEBI:57945"/>
        <dbReference type="ChEBI" id="CHEBI:71579"/>
        <dbReference type="EC" id="1.7.1.17"/>
    </reaction>
</comment>
<comment type="cofactor">
    <cofactor evidence="1">
        <name>FMN</name>
        <dbReference type="ChEBI" id="CHEBI:58210"/>
    </cofactor>
    <text evidence="1">Binds 1 FMN per subunit.</text>
</comment>
<comment type="subunit">
    <text evidence="1">Homodimer.</text>
</comment>
<comment type="similarity">
    <text evidence="1">Belongs to the azoreductase type 1 family.</text>
</comment>
<proteinExistence type="inferred from homology"/>